<name>TFB4_KLULA</name>
<keyword id="KW-0227">DNA damage</keyword>
<keyword id="KW-0234">DNA repair</keyword>
<keyword id="KW-0479">Metal-binding</keyword>
<keyword id="KW-0539">Nucleus</keyword>
<keyword id="KW-1185">Reference proteome</keyword>
<keyword id="KW-0804">Transcription</keyword>
<keyword id="KW-0805">Transcription regulation</keyword>
<keyword id="KW-0862">Zinc</keyword>
<keyword id="KW-0863">Zinc-finger</keyword>
<organism>
    <name type="scientific">Kluyveromyces lactis (strain ATCC 8585 / CBS 2359 / DSM 70799 / NBRC 1267 / NRRL Y-1140 / WM37)</name>
    <name type="common">Yeast</name>
    <name type="synonym">Candida sphaerica</name>
    <dbReference type="NCBI Taxonomy" id="284590"/>
    <lineage>
        <taxon>Eukaryota</taxon>
        <taxon>Fungi</taxon>
        <taxon>Dikarya</taxon>
        <taxon>Ascomycota</taxon>
        <taxon>Saccharomycotina</taxon>
        <taxon>Saccharomycetes</taxon>
        <taxon>Saccharomycetales</taxon>
        <taxon>Saccharomycetaceae</taxon>
        <taxon>Kluyveromyces</taxon>
    </lineage>
</organism>
<evidence type="ECO:0000250" key="1"/>
<evidence type="ECO:0000250" key="2">
    <source>
        <dbReference type="UniProtKB" id="Q12004"/>
    </source>
</evidence>
<evidence type="ECO:0000305" key="3"/>
<protein>
    <recommendedName>
        <fullName>General transcription and DNA repair factor IIH subunit TFB4</fullName>
        <shortName>TFIIH subunit TFB4</shortName>
    </recommendedName>
    <alternativeName>
        <fullName>RNA polymerase II transcription factor B subunit 4</fullName>
    </alternativeName>
</protein>
<feature type="chain" id="PRO_0000119272" description="General transcription and DNA repair factor IIH subunit TFB4">
    <location>
        <begin position="1"/>
        <end position="337"/>
    </location>
</feature>
<feature type="zinc finger region" description="C4-type">
    <location>
        <begin position="287"/>
        <end position="306"/>
    </location>
</feature>
<sequence length="337" mass="36843">MDAIADTVFQGTKSKTQEIEDTPSLLTVVVDTSIHSWVQLTKQQSGSGSEGSSGEKQLIEALKSIVVFLNAHLAFNSGNQVCLIAAHSEGMKYLYPSADSKPSMSMVSSDMYRGFRNVDEIVVEQWYRLFKEELEGQESKVSMKSSLSGAMSSALTYVNRILKENENTSLRSRLLVITCGTSQGKDEIFQYIPIMNCIFSATKMKCSIDVVKIGGGIESTFLQQATDATSGVYLHVENTRGLIQYLSTAMFIDPSLRNVIIKPNQGSVDFRTSCFLTGKVVAVGFVCSVCLCVLSVIPPGQKCPACDSPFDSKIIARLRRKPVLSNGVPKKKNVSNK</sequence>
<gene>
    <name type="primary">TFB4</name>
    <name type="ordered locus">KLLA0B08569g</name>
</gene>
<reference key="1">
    <citation type="journal article" date="2004" name="Nature">
        <title>Genome evolution in yeasts.</title>
        <authorList>
            <person name="Dujon B."/>
            <person name="Sherman D."/>
            <person name="Fischer G."/>
            <person name="Durrens P."/>
            <person name="Casaregola S."/>
            <person name="Lafontaine I."/>
            <person name="de Montigny J."/>
            <person name="Marck C."/>
            <person name="Neuveglise C."/>
            <person name="Talla E."/>
            <person name="Goffard N."/>
            <person name="Frangeul L."/>
            <person name="Aigle M."/>
            <person name="Anthouard V."/>
            <person name="Babour A."/>
            <person name="Barbe V."/>
            <person name="Barnay S."/>
            <person name="Blanchin S."/>
            <person name="Beckerich J.-M."/>
            <person name="Beyne E."/>
            <person name="Bleykasten C."/>
            <person name="Boisrame A."/>
            <person name="Boyer J."/>
            <person name="Cattolico L."/>
            <person name="Confanioleri F."/>
            <person name="de Daruvar A."/>
            <person name="Despons L."/>
            <person name="Fabre E."/>
            <person name="Fairhead C."/>
            <person name="Ferry-Dumazet H."/>
            <person name="Groppi A."/>
            <person name="Hantraye F."/>
            <person name="Hennequin C."/>
            <person name="Jauniaux N."/>
            <person name="Joyet P."/>
            <person name="Kachouri R."/>
            <person name="Kerrest A."/>
            <person name="Koszul R."/>
            <person name="Lemaire M."/>
            <person name="Lesur I."/>
            <person name="Ma L."/>
            <person name="Muller H."/>
            <person name="Nicaud J.-M."/>
            <person name="Nikolski M."/>
            <person name="Oztas S."/>
            <person name="Ozier-Kalogeropoulos O."/>
            <person name="Pellenz S."/>
            <person name="Potier S."/>
            <person name="Richard G.-F."/>
            <person name="Straub M.-L."/>
            <person name="Suleau A."/>
            <person name="Swennen D."/>
            <person name="Tekaia F."/>
            <person name="Wesolowski-Louvel M."/>
            <person name="Westhof E."/>
            <person name="Wirth B."/>
            <person name="Zeniou-Meyer M."/>
            <person name="Zivanovic Y."/>
            <person name="Bolotin-Fukuhara M."/>
            <person name="Thierry A."/>
            <person name="Bouchier C."/>
            <person name="Caudron B."/>
            <person name="Scarpelli C."/>
            <person name="Gaillardin C."/>
            <person name="Weissenbach J."/>
            <person name="Wincker P."/>
            <person name="Souciet J.-L."/>
        </authorList>
    </citation>
    <scope>NUCLEOTIDE SEQUENCE [LARGE SCALE GENOMIC DNA]</scope>
    <source>
        <strain>ATCC 8585 / CBS 2359 / DSM 70799 / NBRC 1267 / NRRL Y-1140 / WM37</strain>
    </source>
</reference>
<comment type="function">
    <text evidence="2">Component of the general transcription and DNA repair factor IIH (TFIIH) core complex, which is involved in general and transcription-coupled nucleotide excision repair (NER) of damaged DNA and, when complexed to TFIIK, in RNA transcription by RNA polymerase II. In NER, TFIIH acts by opening DNA around the lesion to allow the excision of the damaged oligonucleotide and its replacement by a new DNA fragment. In transcription, TFIIH has an essential role in transcription initiation. When the pre-initiation complex (PIC) has been established, TFIIH is required for promoter opening and promoter escape. Phosphorylation of the C-terminal tail (CTD) of the largest subunit of RNA polymerase II by the kinase module TFIIK controls the initiation of transcription.</text>
</comment>
<comment type="subunit">
    <text evidence="2">Component of the 7-subunit TFIIH core complex composed of XPB/SSL2, XPD/RAD3, SSL1, TFB1, TFB2, TFB4 and TFB5, which is active in NER. The core complex associates with the 3-subunit CTD-kinase module TFIIK composed of CCL1, KIN28 and TFB3 to form the 10-subunit holoenzyme (holo-TFIIH) active in transcription.</text>
</comment>
<comment type="subcellular location">
    <subcellularLocation>
        <location evidence="1">Nucleus</location>
    </subcellularLocation>
</comment>
<comment type="similarity">
    <text evidence="3">Belongs to the TFB4 family.</text>
</comment>
<proteinExistence type="inferred from homology"/>
<dbReference type="EMBL" id="CR382122">
    <property type="protein sequence ID" value="CAH02303.1"/>
    <property type="molecule type" value="Genomic_DNA"/>
</dbReference>
<dbReference type="RefSeq" id="XP_451910.1">
    <property type="nucleotide sequence ID" value="XM_451910.1"/>
</dbReference>
<dbReference type="SMR" id="Q6CVX9"/>
<dbReference type="FunCoup" id="Q6CVX9">
    <property type="interactions" value="1222"/>
</dbReference>
<dbReference type="STRING" id="284590.Q6CVX9"/>
<dbReference type="PaxDb" id="284590-Q6CVX9"/>
<dbReference type="KEGG" id="kla:KLLA0_B08569g"/>
<dbReference type="eggNOG" id="KOG2487">
    <property type="taxonomic scope" value="Eukaryota"/>
</dbReference>
<dbReference type="HOGENOM" id="CLU_040211_0_0_1"/>
<dbReference type="InParanoid" id="Q6CVX9"/>
<dbReference type="OMA" id="QGCDITS"/>
<dbReference type="Proteomes" id="UP000000598">
    <property type="component" value="Chromosome B"/>
</dbReference>
<dbReference type="GO" id="GO:0000439">
    <property type="term" value="C:transcription factor TFIIH core complex"/>
    <property type="evidence" value="ECO:0007669"/>
    <property type="project" value="InterPro"/>
</dbReference>
<dbReference type="GO" id="GO:0005675">
    <property type="term" value="C:transcription factor TFIIH holo complex"/>
    <property type="evidence" value="ECO:0007669"/>
    <property type="project" value="TreeGrafter"/>
</dbReference>
<dbReference type="GO" id="GO:0008270">
    <property type="term" value="F:zinc ion binding"/>
    <property type="evidence" value="ECO:0007669"/>
    <property type="project" value="UniProtKB-KW"/>
</dbReference>
<dbReference type="GO" id="GO:0006289">
    <property type="term" value="P:nucleotide-excision repair"/>
    <property type="evidence" value="ECO:0007669"/>
    <property type="project" value="InterPro"/>
</dbReference>
<dbReference type="GO" id="GO:0006355">
    <property type="term" value="P:regulation of DNA-templated transcription"/>
    <property type="evidence" value="ECO:0007669"/>
    <property type="project" value="InterPro"/>
</dbReference>
<dbReference type="FunFam" id="3.40.50.410:FF:000093">
    <property type="entry name" value="Transcription initiation factor TFIIH subunit"/>
    <property type="match status" value="1"/>
</dbReference>
<dbReference type="Gene3D" id="3.40.50.410">
    <property type="entry name" value="von Willebrand factor, type A domain"/>
    <property type="match status" value="1"/>
</dbReference>
<dbReference type="InterPro" id="IPR004600">
    <property type="entry name" value="TFIIH_Tfb4/GTF2H3"/>
</dbReference>
<dbReference type="InterPro" id="IPR036465">
    <property type="entry name" value="vWFA_dom_sf"/>
</dbReference>
<dbReference type="PANTHER" id="PTHR12831:SF0">
    <property type="entry name" value="GENERAL TRANSCRIPTION FACTOR IIH SUBUNIT 3"/>
    <property type="match status" value="1"/>
</dbReference>
<dbReference type="PANTHER" id="PTHR12831">
    <property type="entry name" value="TRANSCRIPTION INITIATION FACTOR IIH TFIIH , POLYPEPTIDE 3-RELATED"/>
    <property type="match status" value="1"/>
</dbReference>
<dbReference type="Pfam" id="PF03850">
    <property type="entry name" value="Tfb4"/>
    <property type="match status" value="1"/>
</dbReference>
<dbReference type="SUPFAM" id="SSF53300">
    <property type="entry name" value="vWA-like"/>
    <property type="match status" value="1"/>
</dbReference>
<accession>Q6CVX9</accession>